<accession>Q8NQM8</accession>
<accession>Q6M5G5</accession>
<protein>
    <recommendedName>
        <fullName evidence="1">Tyrosine--tRNA ligase</fullName>
        <ecNumber evidence="1">6.1.1.1</ecNumber>
    </recommendedName>
    <alternativeName>
        <fullName evidence="1">Tyrosyl-tRNA synthetase</fullName>
        <shortName evidence="1">TyrRS</shortName>
    </alternativeName>
</protein>
<sequence>MNIIDELSWRGLINQSTDLEALREEASTPITLYCGFDPTGPSLHAGHLVPLLMLRRFQQAGHNPIVLAGGATGMIGDPRDVGERTMNSADTVSDWAERISGQLSRFVDFDGEHAARLVNNAEWTNEMSVVTFLRDVGKHFSLNTMLARDTVKRRLESDGISYTEFSYMLLQANDYVELNKRFGCTLQVGGGDQWGNIVSGVDLNRRVNGTSVHAVTVPLVTDSDGKKFGKSTGGGSLWLDPEMTSPYAWYQYFINASDADVIRYLRWFTFLTQEELAELEVEVAERPFKREAQRRLAREMTNLVHGTEATEAVELAAQALFGRAELRDLDEKTLAASVSETAVAEIKAGEPRTIIDLLVASGLADSKGAAKRAVKEGGAYVNNERIESDDWEPFAEDLLHGSWLVLRRGKKNFAGVQILG</sequence>
<proteinExistence type="inferred from homology"/>
<comment type="function">
    <text evidence="1">Catalyzes the attachment of tyrosine to tRNA(Tyr) in a two-step reaction: tyrosine is first activated by ATP to form Tyr-AMP and then transferred to the acceptor end of tRNA(Tyr).</text>
</comment>
<comment type="catalytic activity">
    <reaction evidence="1">
        <text>tRNA(Tyr) + L-tyrosine + ATP = L-tyrosyl-tRNA(Tyr) + AMP + diphosphate + H(+)</text>
        <dbReference type="Rhea" id="RHEA:10220"/>
        <dbReference type="Rhea" id="RHEA-COMP:9706"/>
        <dbReference type="Rhea" id="RHEA-COMP:9707"/>
        <dbReference type="ChEBI" id="CHEBI:15378"/>
        <dbReference type="ChEBI" id="CHEBI:30616"/>
        <dbReference type="ChEBI" id="CHEBI:33019"/>
        <dbReference type="ChEBI" id="CHEBI:58315"/>
        <dbReference type="ChEBI" id="CHEBI:78442"/>
        <dbReference type="ChEBI" id="CHEBI:78536"/>
        <dbReference type="ChEBI" id="CHEBI:456215"/>
        <dbReference type="EC" id="6.1.1.1"/>
    </reaction>
</comment>
<comment type="subunit">
    <text evidence="1">Homodimer.</text>
</comment>
<comment type="subcellular location">
    <subcellularLocation>
        <location evidence="1">Cytoplasm</location>
    </subcellularLocation>
</comment>
<comment type="similarity">
    <text evidence="1">Belongs to the class-I aminoacyl-tRNA synthetase family. TyrS type 1 subfamily.</text>
</comment>
<organism>
    <name type="scientific">Corynebacterium glutamicum (strain ATCC 13032 / DSM 20300 / JCM 1318 / BCRC 11384 / CCUG 27702 / LMG 3730 / NBRC 12168 / NCIMB 10025 / NRRL B-2784 / 534)</name>
    <dbReference type="NCBI Taxonomy" id="196627"/>
    <lineage>
        <taxon>Bacteria</taxon>
        <taxon>Bacillati</taxon>
        <taxon>Actinomycetota</taxon>
        <taxon>Actinomycetes</taxon>
        <taxon>Mycobacteriales</taxon>
        <taxon>Corynebacteriaceae</taxon>
        <taxon>Corynebacterium</taxon>
    </lineage>
</organism>
<dbReference type="EC" id="6.1.1.1" evidence="1"/>
<dbReference type="EMBL" id="BA000036">
    <property type="protein sequence ID" value="BAB98799.1"/>
    <property type="molecule type" value="Genomic_DNA"/>
</dbReference>
<dbReference type="EMBL" id="BX927152">
    <property type="protein sequence ID" value="CAF21417.1"/>
    <property type="molecule type" value="Genomic_DNA"/>
</dbReference>
<dbReference type="RefSeq" id="NP_600625.1">
    <property type="nucleotide sequence ID" value="NC_003450.3"/>
</dbReference>
<dbReference type="RefSeq" id="WP_011014341.1">
    <property type="nucleotide sequence ID" value="NC_006958.1"/>
</dbReference>
<dbReference type="SMR" id="Q8NQM8"/>
<dbReference type="STRING" id="196627.cg1594"/>
<dbReference type="GeneID" id="1019382"/>
<dbReference type="KEGG" id="cgb:cg1594"/>
<dbReference type="KEGG" id="cgl:Cgl1406"/>
<dbReference type="PATRIC" id="fig|196627.13.peg.1375"/>
<dbReference type="eggNOG" id="COG0162">
    <property type="taxonomic scope" value="Bacteria"/>
</dbReference>
<dbReference type="HOGENOM" id="CLU_024003_0_2_11"/>
<dbReference type="OrthoDB" id="9804243at2"/>
<dbReference type="BioCyc" id="CORYNE:G18NG-10985-MONOMER"/>
<dbReference type="Proteomes" id="UP000000582">
    <property type="component" value="Chromosome"/>
</dbReference>
<dbReference type="Proteomes" id="UP000001009">
    <property type="component" value="Chromosome"/>
</dbReference>
<dbReference type="GO" id="GO:0005829">
    <property type="term" value="C:cytosol"/>
    <property type="evidence" value="ECO:0007669"/>
    <property type="project" value="TreeGrafter"/>
</dbReference>
<dbReference type="GO" id="GO:0005524">
    <property type="term" value="F:ATP binding"/>
    <property type="evidence" value="ECO:0007669"/>
    <property type="project" value="UniProtKB-UniRule"/>
</dbReference>
<dbReference type="GO" id="GO:0003723">
    <property type="term" value="F:RNA binding"/>
    <property type="evidence" value="ECO:0007669"/>
    <property type="project" value="UniProtKB-KW"/>
</dbReference>
<dbReference type="GO" id="GO:0004831">
    <property type="term" value="F:tyrosine-tRNA ligase activity"/>
    <property type="evidence" value="ECO:0007669"/>
    <property type="project" value="UniProtKB-UniRule"/>
</dbReference>
<dbReference type="GO" id="GO:0006437">
    <property type="term" value="P:tyrosyl-tRNA aminoacylation"/>
    <property type="evidence" value="ECO:0007669"/>
    <property type="project" value="UniProtKB-UniRule"/>
</dbReference>
<dbReference type="CDD" id="cd00805">
    <property type="entry name" value="TyrRS_core"/>
    <property type="match status" value="1"/>
</dbReference>
<dbReference type="FunFam" id="1.10.240.10:FF:000001">
    <property type="entry name" value="Tyrosine--tRNA ligase"/>
    <property type="match status" value="1"/>
</dbReference>
<dbReference type="FunFam" id="3.10.290.10:FF:000014">
    <property type="entry name" value="Tyrosine--tRNA ligase"/>
    <property type="match status" value="1"/>
</dbReference>
<dbReference type="FunFam" id="3.40.50.620:FF:000008">
    <property type="entry name" value="Tyrosine--tRNA ligase"/>
    <property type="match status" value="1"/>
</dbReference>
<dbReference type="Gene3D" id="3.40.50.620">
    <property type="entry name" value="HUPs"/>
    <property type="match status" value="1"/>
</dbReference>
<dbReference type="Gene3D" id="3.10.290.10">
    <property type="entry name" value="RNA-binding S4 domain"/>
    <property type="match status" value="1"/>
</dbReference>
<dbReference type="Gene3D" id="1.10.240.10">
    <property type="entry name" value="Tyrosyl-Transfer RNA Synthetase"/>
    <property type="match status" value="1"/>
</dbReference>
<dbReference type="HAMAP" id="MF_02006">
    <property type="entry name" value="Tyr_tRNA_synth_type1"/>
    <property type="match status" value="1"/>
</dbReference>
<dbReference type="InterPro" id="IPR001412">
    <property type="entry name" value="aa-tRNA-synth_I_CS"/>
</dbReference>
<dbReference type="InterPro" id="IPR002305">
    <property type="entry name" value="aa-tRNA-synth_Ic"/>
</dbReference>
<dbReference type="InterPro" id="IPR014729">
    <property type="entry name" value="Rossmann-like_a/b/a_fold"/>
</dbReference>
<dbReference type="InterPro" id="IPR036986">
    <property type="entry name" value="S4_RNA-bd_sf"/>
</dbReference>
<dbReference type="InterPro" id="IPR054608">
    <property type="entry name" value="SYY-like_C"/>
</dbReference>
<dbReference type="InterPro" id="IPR002307">
    <property type="entry name" value="Tyr-tRNA-ligase"/>
</dbReference>
<dbReference type="InterPro" id="IPR024088">
    <property type="entry name" value="Tyr-tRNA-ligase_bac-type"/>
</dbReference>
<dbReference type="InterPro" id="IPR024107">
    <property type="entry name" value="Tyr-tRNA-ligase_bac_1"/>
</dbReference>
<dbReference type="NCBIfam" id="TIGR00234">
    <property type="entry name" value="tyrS"/>
    <property type="match status" value="1"/>
</dbReference>
<dbReference type="PANTHER" id="PTHR11766:SF0">
    <property type="entry name" value="TYROSINE--TRNA LIGASE, MITOCHONDRIAL"/>
    <property type="match status" value="1"/>
</dbReference>
<dbReference type="PANTHER" id="PTHR11766">
    <property type="entry name" value="TYROSYL-TRNA SYNTHETASE"/>
    <property type="match status" value="1"/>
</dbReference>
<dbReference type="Pfam" id="PF22421">
    <property type="entry name" value="SYY_C-terminal"/>
    <property type="match status" value="1"/>
</dbReference>
<dbReference type="Pfam" id="PF00579">
    <property type="entry name" value="tRNA-synt_1b"/>
    <property type="match status" value="1"/>
</dbReference>
<dbReference type="PRINTS" id="PR01040">
    <property type="entry name" value="TRNASYNTHTYR"/>
</dbReference>
<dbReference type="SUPFAM" id="SSF55174">
    <property type="entry name" value="Alpha-L RNA-binding motif"/>
    <property type="match status" value="1"/>
</dbReference>
<dbReference type="SUPFAM" id="SSF52374">
    <property type="entry name" value="Nucleotidylyl transferase"/>
    <property type="match status" value="1"/>
</dbReference>
<dbReference type="PROSITE" id="PS00178">
    <property type="entry name" value="AA_TRNA_LIGASE_I"/>
    <property type="match status" value="1"/>
</dbReference>
<dbReference type="PROSITE" id="PS50889">
    <property type="entry name" value="S4"/>
    <property type="match status" value="1"/>
</dbReference>
<reference key="1">
    <citation type="journal article" date="2003" name="Appl. Microbiol. Biotechnol.">
        <title>The Corynebacterium glutamicum genome: features and impacts on biotechnological processes.</title>
        <authorList>
            <person name="Ikeda M."/>
            <person name="Nakagawa S."/>
        </authorList>
    </citation>
    <scope>NUCLEOTIDE SEQUENCE [LARGE SCALE GENOMIC DNA]</scope>
    <source>
        <strain>ATCC 13032 / DSM 20300 / JCM 1318 / BCRC 11384 / CCUG 27702 / LMG 3730 / NBRC 12168 / NCIMB 10025 / NRRL B-2784 / 534</strain>
    </source>
</reference>
<reference key="2">
    <citation type="journal article" date="2003" name="J. Biotechnol.">
        <title>The complete Corynebacterium glutamicum ATCC 13032 genome sequence and its impact on the production of L-aspartate-derived amino acids and vitamins.</title>
        <authorList>
            <person name="Kalinowski J."/>
            <person name="Bathe B."/>
            <person name="Bartels D."/>
            <person name="Bischoff N."/>
            <person name="Bott M."/>
            <person name="Burkovski A."/>
            <person name="Dusch N."/>
            <person name="Eggeling L."/>
            <person name="Eikmanns B.J."/>
            <person name="Gaigalat L."/>
            <person name="Goesmann A."/>
            <person name="Hartmann M."/>
            <person name="Huthmacher K."/>
            <person name="Kraemer R."/>
            <person name="Linke B."/>
            <person name="McHardy A.C."/>
            <person name="Meyer F."/>
            <person name="Moeckel B."/>
            <person name="Pfefferle W."/>
            <person name="Puehler A."/>
            <person name="Rey D.A."/>
            <person name="Rueckert C."/>
            <person name="Rupp O."/>
            <person name="Sahm H."/>
            <person name="Wendisch V.F."/>
            <person name="Wiegraebe I."/>
            <person name="Tauch A."/>
        </authorList>
    </citation>
    <scope>NUCLEOTIDE SEQUENCE [LARGE SCALE GENOMIC DNA]</scope>
    <source>
        <strain>ATCC 13032 / DSM 20300 / JCM 1318 / BCRC 11384 / CCUG 27702 / LMG 3730 / NBRC 12168 / NCIMB 10025 / NRRL B-2784 / 534</strain>
    </source>
</reference>
<keyword id="KW-0030">Aminoacyl-tRNA synthetase</keyword>
<keyword id="KW-0067">ATP-binding</keyword>
<keyword id="KW-0963">Cytoplasm</keyword>
<keyword id="KW-0436">Ligase</keyword>
<keyword id="KW-0547">Nucleotide-binding</keyword>
<keyword id="KW-0648">Protein biosynthesis</keyword>
<keyword id="KW-1185">Reference proteome</keyword>
<keyword id="KW-0694">RNA-binding</keyword>
<name>SYY_CORGL</name>
<gene>
    <name evidence="1" type="primary">tyrS</name>
    <name type="ordered locus">Cgl1406</name>
    <name type="ordered locus">cg1594</name>
</gene>
<feature type="chain" id="PRO_0000234702" description="Tyrosine--tRNA ligase">
    <location>
        <begin position="1"/>
        <end position="420"/>
    </location>
</feature>
<feature type="domain" description="S4 RNA-binding" evidence="1">
    <location>
        <begin position="352"/>
        <end position="418"/>
    </location>
</feature>
<feature type="short sequence motif" description="'HIGH' region">
    <location>
        <begin position="38"/>
        <end position="47"/>
    </location>
</feature>
<feature type="short sequence motif" description="'KMSKS' region">
    <location>
        <begin position="227"/>
        <end position="231"/>
    </location>
</feature>
<feature type="binding site" evidence="1">
    <location>
        <position position="33"/>
    </location>
    <ligand>
        <name>L-tyrosine</name>
        <dbReference type="ChEBI" id="CHEBI:58315"/>
    </ligand>
</feature>
<feature type="binding site" evidence="1">
    <location>
        <position position="167"/>
    </location>
    <ligand>
        <name>L-tyrosine</name>
        <dbReference type="ChEBI" id="CHEBI:58315"/>
    </ligand>
</feature>
<feature type="binding site" evidence="1">
    <location>
        <position position="171"/>
    </location>
    <ligand>
        <name>L-tyrosine</name>
        <dbReference type="ChEBI" id="CHEBI:58315"/>
    </ligand>
</feature>
<feature type="binding site" evidence="1">
    <location>
        <position position="230"/>
    </location>
    <ligand>
        <name>ATP</name>
        <dbReference type="ChEBI" id="CHEBI:30616"/>
    </ligand>
</feature>
<evidence type="ECO:0000255" key="1">
    <source>
        <dbReference type="HAMAP-Rule" id="MF_02006"/>
    </source>
</evidence>